<protein>
    <recommendedName>
        <fullName>Coat protein TP1</fullName>
    </recommendedName>
</protein>
<organism>
    <name type="scientific">Thermoproteus tenax virus 1 (strain KRA1)</name>
    <name type="common">TTV1</name>
    <dbReference type="NCBI Taxonomy" id="10480"/>
    <lineage>
        <taxon>Viruses</taxon>
        <taxon>Adnaviria</taxon>
        <taxon>Zilligvirae</taxon>
        <taxon>Taleaviricota</taxon>
        <taxon>Tokiviricetes</taxon>
        <taxon>Primavirales</taxon>
        <taxon>Tristromaviridae</taxon>
        <taxon>Betatristromavirus</taxon>
        <taxon>Betatristromavirus TTV1</taxon>
    </lineage>
</organism>
<proteinExistence type="evidence at protein level"/>
<name>COA1_TTV1K</name>
<comment type="subcellular location">
    <subcellularLocation>
        <location evidence="1">Virion</location>
    </subcellularLocation>
</comment>
<evidence type="ECO:0000305" key="1"/>
<feature type="chain" id="PRO_0000222952" description="Coat protein TP1">
    <location>
        <begin position="1"/>
        <end position="113"/>
    </location>
</feature>
<organismHost>
    <name type="scientific">Thermoproteus tenax</name>
    <dbReference type="NCBI Taxonomy" id="2271"/>
</organismHost>
<dbReference type="EMBL" id="X14855">
    <property type="protein sequence ID" value="CAA32974.1"/>
    <property type="molecule type" value="Genomic_DNA"/>
</dbReference>
<dbReference type="PIR" id="S04392">
    <property type="entry name" value="S04392"/>
</dbReference>
<dbReference type="BRENDA" id="3.1.12.1">
    <property type="organism ID" value="16459"/>
</dbReference>
<dbReference type="Proteomes" id="UP000009250">
    <property type="component" value="Genome"/>
</dbReference>
<dbReference type="GO" id="GO:0019028">
    <property type="term" value="C:viral capsid"/>
    <property type="evidence" value="ECO:0007669"/>
    <property type="project" value="UniProtKB-KW"/>
</dbReference>
<sequence length="113" mass="12933">MIIIKTKNREYTIDENKEINSISAADTICPYRAYRSYHRKIPIKIDDCKEARKIAGSMTHYVILRQLKEQGCETEKIVDPELKFRADAICDGDALLRLRQTSIGTGMRLISGN</sequence>
<keyword id="KW-0167">Capsid protein</keyword>
<keyword id="KW-0903">Direct protein sequencing</keyword>
<keyword id="KW-1185">Reference proteome</keyword>
<keyword id="KW-0946">Virion</keyword>
<reference key="1">
    <citation type="journal article" date="1989" name="Mol. Gen. Genet.">
        <title>Identification and characterization of the genes encoding three structural proteins of the Thermoproteus tenax virus TTV1.</title>
        <authorList>
            <person name="Neumann H."/>
            <person name="Schwass V."/>
            <person name="Eckerskorn C."/>
            <person name="Zillig W."/>
        </authorList>
    </citation>
    <scope>NUCLEOTIDE SEQUENCE [GENOMIC DNA]</scope>
    <scope>PROTEIN SEQUENCE OF 1-4</scope>
</reference>
<accession>P19270</accession>